<sequence length="510" mass="58300">MSVSALNPTRLPGSLSGLLQVAGLLGLLLLLLKAAQLYLHRQWLLRALQQFPCPPFHWLLGHSREFQNGHELQVMLKWVEKFPSACPRWLWGSRAHLLIYDPDYMKVILGRSDPKAQGSYRFLAPWIGYGLLLLNGQTWFQHRRMLTPAFHYDILKPYVGLMADSVQIMLDKWEQLVSQDSSLEVFQDISLMTLDTIMKCAFSHQGSVQLDRNSQSYIQAVGDLNNLFFSRVRNVFHQSDTIYRLSPEGRLSHRACQLAHEHTDRVIQQRKAQLQQEGELEKVRRKRRLDFLDVLLFAKMENGSSLSDQDLRAEVDTFMFEGHDTTASGISWIFYALATHPEHQHRCREEIQGLLGDGASITWEHLDQMPYTTMCIKEALRLYPPVPGVGRQLSSPVTFPDGRSLPKGVIVTLSIYALHHNPKVWPNPEVFDPFPFAPGSARHSHAFLPFSGGPRNCIGKQFAMNELKVAVALTLVRFELLPDPKRVPDQKPRLVLKSSNGIHLRLRKLR</sequence>
<keyword id="KW-0903">Direct protein sequencing</keyword>
<keyword id="KW-0256">Endoplasmic reticulum</keyword>
<keyword id="KW-0349">Heme</keyword>
<keyword id="KW-0408">Iron</keyword>
<keyword id="KW-0472">Membrane</keyword>
<keyword id="KW-0479">Metal-binding</keyword>
<keyword id="KW-0492">Microsome</keyword>
<keyword id="KW-0503">Monooxygenase</keyword>
<keyword id="KW-0521">NADP</keyword>
<keyword id="KW-0560">Oxidoreductase</keyword>
<keyword id="KW-1185">Reference proteome</keyword>
<comment type="function">
    <text>Cytochromes P450 are a group of heme-thiolate monooxygenases. In liver microsomes, this enzyme is involved in an NADPH-dependent electron transport pathway. It oxidizes a variety of structurally unrelated compounds, including steroids, fatty acids, and xenobiotics.</text>
</comment>
<comment type="function">
    <text>The kidney P-450 system is rather specialized for the omega-hydroxylation of fatty acids. Both P450-KA1 and P450-KA2 catalyze the omega- and (omega-1)-hydroxylation of various fatty acids with no drug-metabolizing activity, and hydroxylate prostaglandin A1 and A2 solely at the omega-position.</text>
</comment>
<comment type="catalytic activity">
    <reaction evidence="2">
        <text>an omega-methyl-long-chain fatty acid + reduced [NADPH--hemoprotein reductase] + O2 = an omega-hydroxy-long-chain fatty acid + oxidized [NADPH--hemoprotein reductase] + H2O + H(+)</text>
        <dbReference type="Rhea" id="RHEA:56748"/>
        <dbReference type="Rhea" id="RHEA-COMP:11964"/>
        <dbReference type="Rhea" id="RHEA-COMP:11965"/>
        <dbReference type="ChEBI" id="CHEBI:15377"/>
        <dbReference type="ChEBI" id="CHEBI:15378"/>
        <dbReference type="ChEBI" id="CHEBI:15379"/>
        <dbReference type="ChEBI" id="CHEBI:57618"/>
        <dbReference type="ChEBI" id="CHEBI:58210"/>
        <dbReference type="ChEBI" id="CHEBI:140991"/>
        <dbReference type="ChEBI" id="CHEBI:140992"/>
        <dbReference type="EC" id="1.14.14.80"/>
    </reaction>
</comment>
<comment type="cofactor">
    <cofactor evidence="1">
        <name>heme</name>
        <dbReference type="ChEBI" id="CHEBI:30413"/>
    </cofactor>
</comment>
<comment type="subcellular location">
    <subcellularLocation>
        <location>Endoplasmic reticulum membrane</location>
        <topology>Peripheral membrane protein</topology>
    </subcellularLocation>
    <subcellularLocation>
        <location>Microsome membrane</location>
        <topology>Peripheral membrane protein</topology>
    </subcellularLocation>
</comment>
<comment type="tissue specificity">
    <text>Liver; kidney.</text>
</comment>
<comment type="induction">
    <text>P450 can be induced to high levels in liver and other tissues by various foreign compounds, including drugs, pesticides, and carcinogens.</text>
</comment>
<comment type="similarity">
    <text evidence="5">Belongs to the cytochrome P450 family.</text>
</comment>
<reference key="1">
    <citation type="journal article" date="1990" name="Biochemistry">
        <title>Cloning and expression of three rabbit kidney cDNAs encoding lauric acid omega-hydroxylases.</title>
        <authorList>
            <person name="Johnson E.F."/>
            <person name="Walker D.L."/>
            <person name="Griffin K.J."/>
            <person name="Clark J.E."/>
            <person name="Okita R.T."/>
            <person name="Meurhoff A.S."/>
            <person name="Masters B.S.S."/>
        </authorList>
    </citation>
    <scope>NUCLEOTIDE SEQUENCE [MRNA]</scope>
    <source>
        <tissue>Kidney</tissue>
    </source>
</reference>
<reference key="2">
    <citation type="journal article" date="1989" name="J. Biol. Chem.">
        <title>Two forms of omega-hydroxylase toward prostaglandin A and laurate. cDNA cloning and their expression.</title>
        <authorList>
            <person name="Yokotani N."/>
            <person name="Bernhardt R."/>
            <person name="Sogawa K."/>
            <person name="Kusunose E."/>
            <person name="Gotoh O."/>
            <person name="Kusunose M."/>
            <person name="Fujii-Kuriyama Y."/>
        </authorList>
    </citation>
    <scope>NUCLEOTIDE SEQUENCE [MRNA]</scope>
    <scope>PROTEIN SEQUENCE OF 5-24</scope>
    <source>
        <tissue>Kidney</tissue>
    </source>
</reference>
<reference key="3">
    <citation type="journal article" date="1992" name="Arch. Biochem. Biophys.">
        <title>Characterization of a rabbit gene encoding a clofibrate-inducible fatty acid omega-hydroxylase: CYP4A6.</title>
        <authorList>
            <person name="Muerhoff A.S."/>
            <person name="Griffin K.J."/>
            <person name="Johnson E.F."/>
        </authorList>
    </citation>
    <scope>NUCLEOTIDE SEQUENCE [MRNA]</scope>
</reference>
<reference key="4">
    <citation type="journal article" date="1990" name="J. Biochem.">
        <title>Purification and characterization of two forms of cytochrome P-450 with omega-hydroxylase activities toward prostaglandin A and fatty acids from rabbit liver microsomes.</title>
        <authorList>
            <person name="Kikuta Y."/>
            <person name="Kusunose E."/>
            <person name="Okumoto T."/>
            <person name="Kubota I."/>
            <person name="Kusunose M."/>
        </authorList>
    </citation>
    <scope>PROTEIN SEQUENCE OF 5-24</scope>
</reference>
<evidence type="ECO:0000250" key="1">
    <source>
        <dbReference type="UniProtKB" id="P51869"/>
    </source>
</evidence>
<evidence type="ECO:0000250" key="2">
    <source>
        <dbReference type="UniProtKB" id="Q02928"/>
    </source>
</evidence>
<evidence type="ECO:0000269" key="3">
    <source>
    </source>
</evidence>
<evidence type="ECO:0000269" key="4">
    <source>
    </source>
</evidence>
<evidence type="ECO:0000305" key="5"/>
<name>CP4A6_RABIT</name>
<gene>
    <name type="primary">CYP4A6</name>
</gene>
<dbReference type="EC" id="1.14.14.80" evidence="2"/>
<dbReference type="EMBL" id="M28656">
    <property type="protein sequence ID" value="AAA31230.1"/>
    <property type="molecule type" value="mRNA"/>
</dbReference>
<dbReference type="EMBL" id="M29531">
    <property type="protein sequence ID" value="AAA31234.1"/>
    <property type="molecule type" value="mRNA"/>
</dbReference>
<dbReference type="PIR" id="A34160">
    <property type="entry name" value="A34160"/>
</dbReference>
<dbReference type="RefSeq" id="NP_001164599.1">
    <property type="nucleotide sequence ID" value="NM_001171128.1"/>
</dbReference>
<dbReference type="SMR" id="P14580"/>
<dbReference type="FunCoup" id="P14580">
    <property type="interactions" value="157"/>
</dbReference>
<dbReference type="PaxDb" id="9986-ENSOCUP00000004037"/>
<dbReference type="GeneID" id="100328946"/>
<dbReference type="KEGG" id="ocu:100328946"/>
<dbReference type="CTD" id="100328946"/>
<dbReference type="eggNOG" id="KOG0157">
    <property type="taxonomic scope" value="Eukaryota"/>
</dbReference>
<dbReference type="InParanoid" id="P14580"/>
<dbReference type="OrthoDB" id="1470350at2759"/>
<dbReference type="Proteomes" id="UP000001811">
    <property type="component" value="Unplaced"/>
</dbReference>
<dbReference type="GO" id="GO:0005789">
    <property type="term" value="C:endoplasmic reticulum membrane"/>
    <property type="evidence" value="ECO:0007669"/>
    <property type="project" value="UniProtKB-SubCell"/>
</dbReference>
<dbReference type="GO" id="GO:0020037">
    <property type="term" value="F:heme binding"/>
    <property type="evidence" value="ECO:0007669"/>
    <property type="project" value="InterPro"/>
</dbReference>
<dbReference type="GO" id="GO:0005506">
    <property type="term" value="F:iron ion binding"/>
    <property type="evidence" value="ECO:0007669"/>
    <property type="project" value="InterPro"/>
</dbReference>
<dbReference type="GO" id="GO:0102033">
    <property type="term" value="F:long-chain fatty acid omega-hydroxylase activity"/>
    <property type="evidence" value="ECO:0007669"/>
    <property type="project" value="UniProtKB-EC"/>
</dbReference>
<dbReference type="GO" id="GO:0006629">
    <property type="term" value="P:lipid metabolic process"/>
    <property type="evidence" value="ECO:0007669"/>
    <property type="project" value="UniProtKB-ARBA"/>
</dbReference>
<dbReference type="CDD" id="cd20678">
    <property type="entry name" value="CYP4B-like"/>
    <property type="match status" value="1"/>
</dbReference>
<dbReference type="FunFam" id="1.10.630.10:FF:000005">
    <property type="entry name" value="cytochrome P450 4F22 isoform X2"/>
    <property type="match status" value="1"/>
</dbReference>
<dbReference type="Gene3D" id="1.10.630.10">
    <property type="entry name" value="Cytochrome P450"/>
    <property type="match status" value="1"/>
</dbReference>
<dbReference type="InterPro" id="IPR001128">
    <property type="entry name" value="Cyt_P450"/>
</dbReference>
<dbReference type="InterPro" id="IPR017972">
    <property type="entry name" value="Cyt_P450_CS"/>
</dbReference>
<dbReference type="InterPro" id="IPR002401">
    <property type="entry name" value="Cyt_P450_E_grp-I"/>
</dbReference>
<dbReference type="InterPro" id="IPR036396">
    <property type="entry name" value="Cyt_P450_sf"/>
</dbReference>
<dbReference type="InterPro" id="IPR050196">
    <property type="entry name" value="Cytochrome_P450_Monoox"/>
</dbReference>
<dbReference type="PANTHER" id="PTHR24291:SF39">
    <property type="entry name" value="CYTOCHROME P450 4A11-RELATED"/>
    <property type="match status" value="1"/>
</dbReference>
<dbReference type="PANTHER" id="PTHR24291">
    <property type="entry name" value="CYTOCHROME P450 FAMILY 4"/>
    <property type="match status" value="1"/>
</dbReference>
<dbReference type="Pfam" id="PF00067">
    <property type="entry name" value="p450"/>
    <property type="match status" value="1"/>
</dbReference>
<dbReference type="PRINTS" id="PR00463">
    <property type="entry name" value="EP450I"/>
</dbReference>
<dbReference type="PRINTS" id="PR00385">
    <property type="entry name" value="P450"/>
</dbReference>
<dbReference type="SUPFAM" id="SSF48264">
    <property type="entry name" value="Cytochrome P450"/>
    <property type="match status" value="1"/>
</dbReference>
<dbReference type="PROSITE" id="PS00086">
    <property type="entry name" value="CYTOCHROME_P450"/>
    <property type="match status" value="1"/>
</dbReference>
<proteinExistence type="evidence at protein level"/>
<accession>P14580</accession>
<organism>
    <name type="scientific">Oryctolagus cuniculus</name>
    <name type="common">Rabbit</name>
    <dbReference type="NCBI Taxonomy" id="9986"/>
    <lineage>
        <taxon>Eukaryota</taxon>
        <taxon>Metazoa</taxon>
        <taxon>Chordata</taxon>
        <taxon>Craniata</taxon>
        <taxon>Vertebrata</taxon>
        <taxon>Euteleostomi</taxon>
        <taxon>Mammalia</taxon>
        <taxon>Eutheria</taxon>
        <taxon>Euarchontoglires</taxon>
        <taxon>Glires</taxon>
        <taxon>Lagomorpha</taxon>
        <taxon>Leporidae</taxon>
        <taxon>Oryctolagus</taxon>
    </lineage>
</organism>
<feature type="propeptide" id="PRO_0000003575" evidence="3 4">
    <location>
        <begin position="1"/>
        <end position="4"/>
    </location>
</feature>
<feature type="chain" id="PRO_0000003576" description="Cytochrome P450 4A6">
    <location>
        <begin position="5"/>
        <end position="510"/>
    </location>
</feature>
<feature type="binding site" description="covalent" evidence="1">
    <location>
        <position position="321"/>
    </location>
    <ligand>
        <name>heme</name>
        <dbReference type="ChEBI" id="CHEBI:30413"/>
    </ligand>
</feature>
<feature type="binding site" description="axial binding residue" evidence="1">
    <location>
        <position position="457"/>
    </location>
    <ligand>
        <name>heme</name>
        <dbReference type="ChEBI" id="CHEBI:30413"/>
    </ligand>
    <ligandPart>
        <name>Fe</name>
        <dbReference type="ChEBI" id="CHEBI:18248"/>
    </ligandPart>
</feature>
<feature type="sequence conflict" description="In Ref. 3; no nucleotide entry." evidence="5" ref="3">
    <original>L</original>
    <variation>C</variation>
    <location>
        <position position="27"/>
    </location>
</feature>
<feature type="sequence conflict" description="In Ref. 3; no nucleotide entry." evidence="5" ref="3">
    <original>L</original>
    <variation>M</variation>
    <location>
        <position position="380"/>
    </location>
</feature>
<feature type="sequence conflict" description="In Ref. 2; AAA31234." evidence="5" ref="2">
    <original>VW</original>
    <variation>CG</variation>
    <location>
        <begin position="424"/>
        <end position="425"/>
    </location>
</feature>
<feature type="sequence conflict" description="In Ref. 3; no nucleotide entry." evidence="5" ref="3">
    <original>FP</original>
    <variation>SR</variation>
    <location>
        <begin position="434"/>
        <end position="435"/>
    </location>
</feature>
<feature type="sequence conflict" description="In Ref. 2; AAA31234." evidence="5" ref="2">
    <original>F</original>
    <variation>S</variation>
    <location>
        <position position="434"/>
    </location>
</feature>
<feature type="sequence conflict" description="In Ref. 2; AAA31234." evidence="5" ref="2">
    <original>V</original>
    <variation>L</variation>
    <location>
        <position position="476"/>
    </location>
</feature>
<protein>
    <recommendedName>
        <fullName>Cytochrome P450 4A6</fullName>
    </recommendedName>
    <alternativeName>
        <fullName>CYPIVA6</fullName>
    </alternativeName>
    <alternativeName>
        <fullName>Cytochrome P450-KA-1</fullName>
    </alternativeName>
    <alternativeName>
        <fullName>Lauric acid omega-hydroxylase</fullName>
    </alternativeName>
    <alternativeName>
        <fullName>Long-chain fatty acid omega-monooxygenase</fullName>
        <ecNumber evidence="2">1.14.14.80</ecNumber>
    </alternativeName>
</protein>